<feature type="chain" id="PRO_0000324250" description="Non-structural protein 1">
    <location>
        <begin position="1"/>
        <end position="220"/>
    </location>
</feature>
<feature type="region of interest" description="RNA-binding and homodimerization" evidence="1">
    <location>
        <begin position="1"/>
        <end position="73"/>
    </location>
</feature>
<feature type="region of interest" description="CPSF4-binding" evidence="1">
    <location>
        <begin position="180"/>
        <end position="215"/>
    </location>
</feature>
<feature type="short sequence motif" description="Nuclear localization signal" evidence="1">
    <location>
        <begin position="34"/>
        <end position="38"/>
    </location>
</feature>
<feature type="short sequence motif" description="Nuclear export signal" evidence="1">
    <location>
        <begin position="137"/>
        <end position="146"/>
    </location>
</feature>
<proteinExistence type="evidence at protein level"/>
<name>NS1_I72A3</name>
<gene>
    <name evidence="1" type="primary">NS</name>
</gene>
<organismHost>
    <name type="scientific">Aves</name>
    <dbReference type="NCBI Taxonomy" id="8782"/>
</organismHost>
<organismHost>
    <name type="scientific">Cetacea</name>
    <name type="common">whales</name>
    <dbReference type="NCBI Taxonomy" id="9721"/>
</organismHost>
<organismHost>
    <name type="scientific">Homo sapiens</name>
    <name type="common">Human</name>
    <dbReference type="NCBI Taxonomy" id="9606"/>
</organismHost>
<organismHost>
    <name type="scientific">Phocidae</name>
    <name type="common">true seals</name>
    <dbReference type="NCBI Taxonomy" id="9709"/>
</organismHost>
<organismHost>
    <name type="scientific">Sus scrofa</name>
    <name type="common">Pig</name>
    <dbReference type="NCBI Taxonomy" id="9823"/>
</organismHost>
<keyword id="KW-0002">3D-structure</keyword>
<keyword id="KW-0025">Alternative splicing</keyword>
<keyword id="KW-1262">Eukaryotic host gene expression shutoff by virus</keyword>
<keyword id="KW-1035">Host cytoplasm</keyword>
<keyword id="KW-1190">Host gene expression shutoff by virus</keyword>
<keyword id="KW-1192">Host mRNA suppression by virus</keyword>
<keyword id="KW-1048">Host nucleus</keyword>
<keyword id="KW-0945">Host-virus interaction</keyword>
<keyword id="KW-1090">Inhibition of host innate immune response by virus</keyword>
<keyword id="KW-1114">Inhibition of host interferon signaling pathway by virus</keyword>
<keyword id="KW-1102">Inhibition of host PKR by virus</keyword>
<keyword id="KW-1103">Inhibition of host pre-mRNA processing by virus</keyword>
<keyword id="KW-1088">Inhibition of host RIG-I by virus</keyword>
<keyword id="KW-1113">Inhibition of host RLR pathway by virus</keyword>
<keyword id="KW-0922">Interferon antiviral system evasion</keyword>
<keyword id="KW-0694">RNA-binding</keyword>
<keyword id="KW-0832">Ubl conjugation</keyword>
<keyword id="KW-0899">Viral immunoevasion</keyword>
<comment type="function">
    <text evidence="1">Inhibits post-transcriptional processing of cellular pre-mRNA, by binding and inhibiting two cellular proteins that are required for the 3'-end processing of cellular pre-mRNAs: the 30 kDa cleavage and polyadenylation specificity factor/CPSF4 and the poly(A)-binding protein 2/PABPN1. In turn, unprocessed 3' end pre-mRNAs accumulate in the host nucleus and are no longer exported to the cytoplasm. Cellular protein synthesis is thereby shut off very early after virus infection. Viral protein synthesis is not affected by the inhibition of the cellular 3' end processing machinery because the poly(A) tails of viral mRNAs are produced by the viral polymerase through a stuttering mechanism. Prevents the establishment of the cellular antiviral state by inhibiting TRIM25-mediated RIGI ubiquitination, which normally triggers the antiviral transduction signal that leads to the activation of type I IFN genes by transcription factors IRF3 and IRF7. Also binds poly(A) and U6 snRNA. Inhibits the integrated stress response (ISR) in the infected cell by blocking dsRNA binding by EIF2AK2/PKR and further phosphorylation of EIF2S1/EIF-2ALPHA. Stress granule formation is thus inhibited, which allows protein synthesis and viral replication.</text>
</comment>
<comment type="subunit">
    <text evidence="1">Homodimer. Interacts with host TRIM25 (via coiled coil); this interaction specifically inhibits TRIM25 multimerization and TRIM25-mediated RIGI CARD ubiquitination. Interacts with human EIF2AK2/PKR, CPSF4, IVNS1ABP and PABPN1.</text>
</comment>
<comment type="subcellular location">
    <subcellularLocation>
        <location evidence="1">Host nucleus</location>
    </subcellularLocation>
    <subcellularLocation>
        <location evidence="1">Host cytoplasm</location>
    </subcellularLocation>
    <text evidence="1">In uninfected, transfected cells, NS1 is localized in the nucleus. Only in virus infected cells, the nuclear export signal is unveiled, presumably by a viral protein, and a fraction of NS1 is exported in the cytoplasm.</text>
</comment>
<comment type="alternative products">
    <event type="alternative splicing"/>
    <isoform>
        <id>Q463W9-1</id>
        <name>NS1</name>
        <sequence type="displayed"/>
    </isoform>
    <isoform>
        <id>Q463X0-1</id>
        <name>NEP</name>
        <name>NS2</name>
        <sequence type="external"/>
    </isoform>
</comment>
<comment type="domain">
    <text evidence="1">The dsRNA-binding region is required for suppression of RNA silencing.</text>
</comment>
<comment type="PTM">
    <text evidence="1">Upon interferon induction, ISGylated via host HERC5; this results in the impairment of NS1 interaction with RNA targets due to its inability to form homodimers and to interact with host EIF2AK2/PKR.</text>
</comment>
<comment type="similarity">
    <text evidence="1">Belongs to the influenza A viruses NS1 family.</text>
</comment>
<dbReference type="EMBL" id="CY002100">
    <property type="protein sequence ID" value="AAZ43388.1"/>
    <property type="molecule type" value="Genomic_RNA"/>
</dbReference>
<dbReference type="PDB" id="8IZN">
    <property type="method" value="EM"/>
    <property type="resolution" value="6.67 A"/>
    <property type="chains" value="B=84-205"/>
</dbReference>
<dbReference type="PDBsum" id="8IZN"/>
<dbReference type="EMDB" id="EMD-35866"/>
<dbReference type="SMR" id="Q463W9"/>
<dbReference type="Proteomes" id="UP000118421">
    <property type="component" value="Genome"/>
</dbReference>
<dbReference type="GO" id="GO:0030430">
    <property type="term" value="C:host cell cytoplasm"/>
    <property type="evidence" value="ECO:0007669"/>
    <property type="project" value="UniProtKB-SubCell"/>
</dbReference>
<dbReference type="GO" id="GO:0042025">
    <property type="term" value="C:host cell nucleus"/>
    <property type="evidence" value="ECO:0007669"/>
    <property type="project" value="UniProtKB-SubCell"/>
</dbReference>
<dbReference type="GO" id="GO:0030291">
    <property type="term" value="F:protein serine/threonine kinase inhibitor activity"/>
    <property type="evidence" value="ECO:0007669"/>
    <property type="project" value="UniProtKB-KW"/>
</dbReference>
<dbReference type="GO" id="GO:0003723">
    <property type="term" value="F:RNA binding"/>
    <property type="evidence" value="ECO:0007669"/>
    <property type="project" value="UniProtKB-KW"/>
</dbReference>
<dbReference type="GO" id="GO:0039540">
    <property type="term" value="P:symbiont-mediated suppression of host cytoplasmic pattern recognition receptor signaling pathway via inhibition of RIG-I activity"/>
    <property type="evidence" value="ECO:0007669"/>
    <property type="project" value="UniProtKB-KW"/>
</dbReference>
<dbReference type="GO" id="GO:0039657">
    <property type="term" value="P:symbiont-mediated suppression of host gene expression"/>
    <property type="evidence" value="ECO:0007669"/>
    <property type="project" value="UniProtKB-KW"/>
</dbReference>
<dbReference type="GO" id="GO:0039524">
    <property type="term" value="P:symbiont-mediated suppression of host mRNA processing"/>
    <property type="evidence" value="ECO:0007669"/>
    <property type="project" value="UniProtKB-KW"/>
</dbReference>
<dbReference type="GO" id="GO:0039580">
    <property type="term" value="P:symbiont-mediated suppression of host PKR/eIFalpha signaling"/>
    <property type="evidence" value="ECO:0007669"/>
    <property type="project" value="UniProtKB-KW"/>
</dbReference>
<dbReference type="GO" id="GO:0039502">
    <property type="term" value="P:symbiont-mediated suppression of host type I interferon-mediated signaling pathway"/>
    <property type="evidence" value="ECO:0007669"/>
    <property type="project" value="UniProtKB-KW"/>
</dbReference>
<dbReference type="FunFam" id="1.10.287.10:FF:000001">
    <property type="entry name" value="Non-structural protein 1"/>
    <property type="match status" value="1"/>
</dbReference>
<dbReference type="FunFam" id="3.30.420.330:FF:000001">
    <property type="entry name" value="Non-structural protein 1"/>
    <property type="match status" value="1"/>
</dbReference>
<dbReference type="Gene3D" id="3.30.420.330">
    <property type="entry name" value="Influenza virus non-structural protein, effector domain"/>
    <property type="match status" value="1"/>
</dbReference>
<dbReference type="Gene3D" id="1.10.287.10">
    <property type="entry name" value="S15/NS1, RNA-binding"/>
    <property type="match status" value="1"/>
</dbReference>
<dbReference type="HAMAP" id="MF_04066">
    <property type="entry name" value="INFV_NS1"/>
    <property type="match status" value="1"/>
</dbReference>
<dbReference type="InterPro" id="IPR004208">
    <property type="entry name" value="NS1"/>
</dbReference>
<dbReference type="InterPro" id="IPR000256">
    <property type="entry name" value="NS1A"/>
</dbReference>
<dbReference type="InterPro" id="IPR038064">
    <property type="entry name" value="NS1A_effect_dom-like_sf"/>
</dbReference>
<dbReference type="InterPro" id="IPR009068">
    <property type="entry name" value="uS15_NS1_RNA-bd_sf"/>
</dbReference>
<dbReference type="Pfam" id="PF00600">
    <property type="entry name" value="Flu_NS1"/>
    <property type="match status" value="1"/>
</dbReference>
<dbReference type="SUPFAM" id="SSF143021">
    <property type="entry name" value="Ns1 effector domain-like"/>
    <property type="match status" value="1"/>
</dbReference>
<dbReference type="SUPFAM" id="SSF47060">
    <property type="entry name" value="S15/NS1 RNA-binding domain"/>
    <property type="match status" value="1"/>
</dbReference>
<organism>
    <name type="scientific">Influenza A virus (strain A/Memphis/102/1972 H3N2)</name>
    <dbReference type="NCBI Taxonomy" id="385640"/>
    <lineage>
        <taxon>Viruses</taxon>
        <taxon>Riboviria</taxon>
        <taxon>Orthornavirae</taxon>
        <taxon>Negarnaviricota</taxon>
        <taxon>Polyploviricotina</taxon>
        <taxon>Insthoviricetes</taxon>
        <taxon>Articulavirales</taxon>
        <taxon>Orthomyxoviridae</taxon>
        <taxon>Alphainfluenzavirus</taxon>
        <taxon>Alphainfluenzavirus influenzae</taxon>
        <taxon>Influenza A virus</taxon>
    </lineage>
</organism>
<reference key="1">
    <citation type="submission" date="2005-08" db="EMBL/GenBank/DDBJ databases">
        <title>The NIAID influenza genome sequencing project.</title>
        <authorList>
            <person name="Ghedin E."/>
            <person name="Spiro D."/>
            <person name="Miller N."/>
            <person name="Zaborsky J."/>
            <person name="Feldblyum T."/>
            <person name="Subbu V."/>
            <person name="Shumway M."/>
            <person name="Sparenborg J."/>
            <person name="Groveman L."/>
            <person name="Halpin R."/>
            <person name="Sitz J."/>
            <person name="Koo H."/>
            <person name="Salzberg S.L."/>
            <person name="Webster R.G."/>
            <person name="Hoffmann E."/>
            <person name="Krauss S."/>
            <person name="Naeve C."/>
            <person name="Bao Y."/>
            <person name="Bolotov P."/>
            <person name="Dernovoy D."/>
            <person name="Kiryutin B."/>
            <person name="Lipman D.J."/>
            <person name="Tatusova T."/>
        </authorList>
    </citation>
    <scope>NUCLEOTIDE SEQUENCE [GENOMIC RNA]</scope>
</reference>
<protein>
    <recommendedName>
        <fullName evidence="1">Non-structural protein 1</fullName>
        <shortName evidence="1">NS1</shortName>
    </recommendedName>
    <alternativeName>
        <fullName evidence="1">NS1A</fullName>
    </alternativeName>
</protein>
<accession>Q463W9</accession>
<evidence type="ECO:0000255" key="1">
    <source>
        <dbReference type="HAMAP-Rule" id="MF_04066"/>
    </source>
</evidence>
<sequence length="220" mass="24844">MDSNTVSSFQVDCFLWHVRKQVVDQELGDAPFLDRLRRDQKSLRGRGSTLGLNIEAATHVGKQIVEKILKEESDEALKMTMASTPASRYITDMTIEELSRDWFMLMPKQKVEGPLCIRIDQAIMDKNIMLKANFSVIFDRLETLILLRAFTEEGAIVGEISPLPSFPGHTIEDVKNAIGVLIGGLEWNDNTVRVSKTLQRFAWGSSNENGRPPLTPKQKR</sequence>